<keyword id="KW-0025">Alternative splicing</keyword>
<keyword id="KW-0472">Membrane</keyword>
<keyword id="KW-0539">Nucleus</keyword>
<keyword id="KW-1185">Reference proteome</keyword>
<keyword id="KW-0735">Signal-anchor</keyword>
<keyword id="KW-0804">Transcription</keyword>
<keyword id="KW-0805">Transcription regulation</keyword>
<keyword id="KW-0812">Transmembrane</keyword>
<keyword id="KW-1133">Transmembrane helix</keyword>
<evidence type="ECO:0000250" key="1"/>
<evidence type="ECO:0000255" key="2"/>
<evidence type="ECO:0000256" key="3">
    <source>
        <dbReference type="SAM" id="MobiDB-lite"/>
    </source>
</evidence>
<evidence type="ECO:0000269" key="4">
    <source>
    </source>
</evidence>
<evidence type="ECO:0000269" key="5">
    <source>
    </source>
</evidence>
<evidence type="ECO:0000303" key="6">
    <source ref="1"/>
</evidence>
<evidence type="ECO:0000305" key="7"/>
<proteinExistence type="evidence at protein level"/>
<name>AT1B4_MOUSE</name>
<protein>
    <recommendedName>
        <fullName>Protein ATP1B4</fullName>
    </recommendedName>
    <alternativeName>
        <fullName>X,K-ATPase subunit beta-m</fullName>
    </alternativeName>
    <alternativeName>
        <fullName>X/potassium-transporting ATPase subunit beta-m</fullName>
    </alternativeName>
</protein>
<dbReference type="EMBL" id="AF348324">
    <property type="protein sequence ID" value="AAK30148.1"/>
    <property type="molecule type" value="mRNA"/>
</dbReference>
<dbReference type="EMBL" id="AF348325">
    <property type="protein sequence ID" value="AAK30149.1"/>
    <property type="molecule type" value="mRNA"/>
</dbReference>
<dbReference type="EMBL" id="AK053500">
    <property type="protein sequence ID" value="BAC35406.1"/>
    <property type="molecule type" value="mRNA"/>
</dbReference>
<dbReference type="EMBL" id="AL513347">
    <property type="status" value="NOT_ANNOTATED_CDS"/>
    <property type="molecule type" value="Genomic_DNA"/>
</dbReference>
<dbReference type="EMBL" id="CH466570">
    <property type="protein sequence ID" value="EDL29013.1"/>
    <property type="molecule type" value="Genomic_DNA"/>
</dbReference>
<dbReference type="EMBL" id="BC137924">
    <property type="protein sequence ID" value="AAI37925.1"/>
    <property type="molecule type" value="mRNA"/>
</dbReference>
<dbReference type="CCDS" id="CCDS30090.1">
    <molecule id="Q99ME6-1"/>
</dbReference>
<dbReference type="CCDS" id="CCDS72368.1">
    <molecule id="Q99ME6-2"/>
</dbReference>
<dbReference type="RefSeq" id="NP_001277318.1">
    <molecule id="Q99ME6-2"/>
    <property type="nucleotide sequence ID" value="NM_001290389.1"/>
</dbReference>
<dbReference type="RefSeq" id="NP_598451.1">
    <molecule id="Q99ME6-1"/>
    <property type="nucleotide sequence ID" value="NM_133690.3"/>
</dbReference>
<dbReference type="SMR" id="Q99ME6"/>
<dbReference type="BioGRID" id="212460">
    <property type="interactions" value="12"/>
</dbReference>
<dbReference type="DIP" id="DIP-60965N"/>
<dbReference type="FunCoup" id="Q99ME6">
    <property type="interactions" value="1146"/>
</dbReference>
<dbReference type="IntAct" id="Q99ME6">
    <property type="interactions" value="3"/>
</dbReference>
<dbReference type="STRING" id="10090.ENSMUSP00000016471"/>
<dbReference type="PhosphoSitePlus" id="Q99ME6"/>
<dbReference type="jPOST" id="Q99ME6"/>
<dbReference type="PaxDb" id="10090-ENSMUSP00000016471"/>
<dbReference type="ProteomicsDB" id="281817">
    <molecule id="Q99ME6-1"/>
</dbReference>
<dbReference type="ProteomicsDB" id="281818">
    <molecule id="Q99ME6-2"/>
</dbReference>
<dbReference type="Antibodypedia" id="44620">
    <property type="antibodies" value="47 antibodies from 13 providers"/>
</dbReference>
<dbReference type="DNASU" id="67821"/>
<dbReference type="Ensembl" id="ENSMUST00000016471.9">
    <molecule id="Q99ME6-1"/>
    <property type="protein sequence ID" value="ENSMUSP00000016471.3"/>
    <property type="gene ID" value="ENSMUSG00000016327.10"/>
</dbReference>
<dbReference type="Ensembl" id="ENSMUST00000115134.2">
    <molecule id="Q99ME6-2"/>
    <property type="protein sequence ID" value="ENSMUSP00000110787.2"/>
    <property type="gene ID" value="ENSMUSG00000016327.10"/>
</dbReference>
<dbReference type="GeneID" id="67821"/>
<dbReference type="KEGG" id="mmu:67821"/>
<dbReference type="UCSC" id="uc009szt.2">
    <molecule id="Q99ME6-1"/>
    <property type="organism name" value="mouse"/>
</dbReference>
<dbReference type="AGR" id="MGI:1915071"/>
<dbReference type="CTD" id="23439"/>
<dbReference type="MGI" id="MGI:1915071">
    <property type="gene designation" value="Atp1b4"/>
</dbReference>
<dbReference type="VEuPathDB" id="HostDB:ENSMUSG00000016327"/>
<dbReference type="eggNOG" id="KOG3927">
    <property type="taxonomic scope" value="Eukaryota"/>
</dbReference>
<dbReference type="GeneTree" id="ENSGT01030000234579"/>
<dbReference type="HOGENOM" id="CLU_057702_1_0_1"/>
<dbReference type="InParanoid" id="Q99ME6"/>
<dbReference type="OMA" id="FGGCMFC"/>
<dbReference type="OrthoDB" id="5912413at2759"/>
<dbReference type="PhylomeDB" id="Q99ME6"/>
<dbReference type="TreeFam" id="TF314618"/>
<dbReference type="Reactome" id="R-MMU-2173795">
    <property type="pathway name" value="Downregulation of SMAD2/3:SMAD4 transcriptional activity"/>
</dbReference>
<dbReference type="BioGRID-ORCS" id="67821">
    <property type="hits" value="1 hit in 78 CRISPR screens"/>
</dbReference>
<dbReference type="ChiTaRS" id="Atp1b4">
    <property type="organism name" value="mouse"/>
</dbReference>
<dbReference type="PRO" id="PR:Q99ME6"/>
<dbReference type="Proteomes" id="UP000000589">
    <property type="component" value="Chromosome X"/>
</dbReference>
<dbReference type="RNAct" id="Q99ME6">
    <property type="molecule type" value="protein"/>
</dbReference>
<dbReference type="Bgee" id="ENSMUSG00000016327">
    <property type="expression patterns" value="Expressed in late embryo and 56 other cell types or tissues"/>
</dbReference>
<dbReference type="ExpressionAtlas" id="Q99ME6">
    <property type="expression patterns" value="baseline and differential"/>
</dbReference>
<dbReference type="GO" id="GO:0005635">
    <property type="term" value="C:nuclear envelope"/>
    <property type="evidence" value="ECO:0000266"/>
    <property type="project" value="MGI"/>
</dbReference>
<dbReference type="GO" id="GO:0005637">
    <property type="term" value="C:nuclear inner membrane"/>
    <property type="evidence" value="ECO:0000250"/>
    <property type="project" value="UniProtKB"/>
</dbReference>
<dbReference type="GO" id="GO:0005634">
    <property type="term" value="C:nucleus"/>
    <property type="evidence" value="ECO:0000314"/>
    <property type="project" value="MGI"/>
</dbReference>
<dbReference type="GO" id="GO:0005890">
    <property type="term" value="C:sodium:potassium-exchanging ATPase complex"/>
    <property type="evidence" value="ECO:0007669"/>
    <property type="project" value="InterPro"/>
</dbReference>
<dbReference type="GO" id="GO:0006813">
    <property type="term" value="P:potassium ion transport"/>
    <property type="evidence" value="ECO:0007669"/>
    <property type="project" value="InterPro"/>
</dbReference>
<dbReference type="GO" id="GO:0006355">
    <property type="term" value="P:regulation of DNA-templated transcription"/>
    <property type="evidence" value="ECO:0000250"/>
    <property type="project" value="UniProtKB"/>
</dbReference>
<dbReference type="GO" id="GO:0006814">
    <property type="term" value="P:sodium ion transport"/>
    <property type="evidence" value="ECO:0007669"/>
    <property type="project" value="InterPro"/>
</dbReference>
<dbReference type="FunFam" id="2.60.40.1660:FF:000001">
    <property type="entry name" value="Sodium/potassium-transporting ATPase subunit beta"/>
    <property type="match status" value="1"/>
</dbReference>
<dbReference type="Gene3D" id="2.60.40.1660">
    <property type="entry name" value="Na, k-atpase alpha subunit"/>
    <property type="match status" value="1"/>
</dbReference>
<dbReference type="InterPro" id="IPR000402">
    <property type="entry name" value="Na/K_ATPase_sub_beta"/>
</dbReference>
<dbReference type="InterPro" id="IPR038702">
    <property type="entry name" value="Na/K_ATPase_sub_beta_sf"/>
</dbReference>
<dbReference type="NCBIfam" id="TIGR01107">
    <property type="entry name" value="Na_K_ATPase_bet"/>
    <property type="match status" value="1"/>
</dbReference>
<dbReference type="PANTHER" id="PTHR11523:SF12">
    <property type="entry name" value="PROTEIN ATP1B4"/>
    <property type="match status" value="1"/>
</dbReference>
<dbReference type="PANTHER" id="PTHR11523">
    <property type="entry name" value="SODIUM/POTASSIUM-DEPENDENT ATPASE BETA SUBUNIT"/>
    <property type="match status" value="1"/>
</dbReference>
<dbReference type="Pfam" id="PF00287">
    <property type="entry name" value="Na_K-ATPase"/>
    <property type="match status" value="1"/>
</dbReference>
<dbReference type="PROSITE" id="PS00390">
    <property type="entry name" value="ATPASE_NA_K_BETA_1"/>
    <property type="match status" value="1"/>
</dbReference>
<dbReference type="PROSITE" id="PS00391">
    <property type="entry name" value="ATPASE_NA_K_BETA_2"/>
    <property type="match status" value="1"/>
</dbReference>
<accession>Q99ME6</accession>
<accession>Q543D0</accession>
<accession>Q99ME5</accession>
<feature type="chain" id="PRO_0000219123" description="Protein ATP1B4">
    <location>
        <begin position="1"/>
        <end position="356"/>
    </location>
</feature>
<feature type="topological domain" description="Nuclear" evidence="2">
    <location>
        <begin position="1"/>
        <end position="109"/>
    </location>
</feature>
<feature type="transmembrane region" description="Helical; Signal-anchor for type II membrane protein" evidence="2">
    <location>
        <begin position="110"/>
        <end position="130"/>
    </location>
</feature>
<feature type="topological domain" description="Perinuclear space" evidence="2">
    <location>
        <begin position="131"/>
        <end position="356"/>
    </location>
</feature>
<feature type="region of interest" description="Disordered" evidence="3">
    <location>
        <begin position="26"/>
        <end position="78"/>
    </location>
</feature>
<feature type="compositionally biased region" description="Acidic residues" evidence="3">
    <location>
        <begin position="33"/>
        <end position="43"/>
    </location>
</feature>
<feature type="compositionally biased region" description="Acidic residues" evidence="3">
    <location>
        <begin position="51"/>
        <end position="72"/>
    </location>
</feature>
<feature type="splice variant" id="VSP_000352" description="In isoform B." evidence="6">
    <location>
        <begin position="106"/>
        <end position="109"/>
    </location>
</feature>
<gene>
    <name type="primary">Atp1b4</name>
</gene>
<organism>
    <name type="scientific">Mus musculus</name>
    <name type="common">Mouse</name>
    <dbReference type="NCBI Taxonomy" id="10090"/>
    <lineage>
        <taxon>Eukaryota</taxon>
        <taxon>Metazoa</taxon>
        <taxon>Chordata</taxon>
        <taxon>Craniata</taxon>
        <taxon>Vertebrata</taxon>
        <taxon>Euteleostomi</taxon>
        <taxon>Mammalia</taxon>
        <taxon>Eutheria</taxon>
        <taxon>Euarchontoglires</taxon>
        <taxon>Glires</taxon>
        <taxon>Rodentia</taxon>
        <taxon>Myomorpha</taxon>
        <taxon>Muroidea</taxon>
        <taxon>Muridae</taxon>
        <taxon>Murinae</taxon>
        <taxon>Mus</taxon>
        <taxon>Mus</taxon>
    </lineage>
</organism>
<comment type="function">
    <text evidence="1">May act as a transcriptional coregulator during muscle development through its interaction with SNW1. Has lost its ancestral function as a Na,K-ATPase beta-subunit (By similarity).</text>
</comment>
<comment type="subunit">
    <text evidence="1 5">Associates with a SMAD7-transcriptional complex. Interacts with TOR1AIP1. Does not associate with known Na,K-ATPase alpha-subunits (By similarity). Interacts with SNW1.</text>
</comment>
<comment type="subcellular location">
    <subcellularLocation>
        <location evidence="1">Nucleus inner membrane</location>
        <topology evidence="1">Single-pass type II membrane protein</topology>
    </subcellularLocation>
    <text evidence="1">Detected in nuclear envelops.</text>
</comment>
<comment type="alternative products">
    <event type="alternative splicing"/>
    <isoform>
        <id>Q99ME6-1</id>
        <name>A</name>
        <sequence type="displayed"/>
    </isoform>
    <isoform>
        <id>Q99ME6-2</id>
        <name>B</name>
        <sequence type="described" ref="VSP_000352"/>
    </isoform>
</comment>
<comment type="tissue specificity">
    <text evidence="4">Expressed in skeletal muscle (at protein level). Expressed during postnatal development in skeletal muscle and heart.</text>
</comment>
<comment type="developmental stage">
    <text evidence="4">Expressed in embryo 15.5 dpc, onward.</text>
</comment>
<comment type="similarity">
    <text evidence="7">Belongs to the X(+)/potassium ATPases subunit beta family.</text>
</comment>
<sequence>MRRQLRSRRAPAFPYGYRYRLDDQDEANHNYLADEEEEAEEEAQVMMVPGLEEEEEEEEGKEEEEEREEEEGQGQSTGSAWWRKLQIVNEYLWDPEKRMSLARTGQSRSLILVIYFFFYASLAAVITLFIYMLFLAISPYMPTFTEQVKPPGVMIRPFAHSLNFNFNVSEPETWQRYVISLNGFLQGYNDSLQEEMNIDCPPGRYFIQDGDEDEDKKACQFKRSFLKNCSGLEDPTFGYSTGQPCILLKMNRIVGFRPEFGDPVKVSCKVQKGDENDIRSINYYPESASFDLRYYPYYGKLTHVNYTSPLVAMHFTDVVKNQAVPVQCQLKGKGIVNDVINDRFVGRIIFTLNIET</sequence>
<reference key="1">
    <citation type="submission" date="2001-02" db="EMBL/GenBank/DDBJ databases">
        <authorList>
            <person name="Pestov N.B."/>
            <person name="Shakhparonov M.I."/>
            <person name="Modyanov N.N."/>
        </authorList>
    </citation>
    <scope>NUCLEOTIDE SEQUENCE [MRNA] (ISOFORMS A AND B)</scope>
    <source>
        <strain>ICR</strain>
    </source>
</reference>
<reference key="2">
    <citation type="journal article" date="2005" name="Science">
        <title>The transcriptional landscape of the mammalian genome.</title>
        <authorList>
            <person name="Carninci P."/>
            <person name="Kasukawa T."/>
            <person name="Katayama S."/>
            <person name="Gough J."/>
            <person name="Frith M.C."/>
            <person name="Maeda N."/>
            <person name="Oyama R."/>
            <person name="Ravasi T."/>
            <person name="Lenhard B."/>
            <person name="Wells C."/>
            <person name="Kodzius R."/>
            <person name="Shimokawa K."/>
            <person name="Bajic V.B."/>
            <person name="Brenner S.E."/>
            <person name="Batalov S."/>
            <person name="Forrest A.R."/>
            <person name="Zavolan M."/>
            <person name="Davis M.J."/>
            <person name="Wilming L.G."/>
            <person name="Aidinis V."/>
            <person name="Allen J.E."/>
            <person name="Ambesi-Impiombato A."/>
            <person name="Apweiler R."/>
            <person name="Aturaliya R.N."/>
            <person name="Bailey T.L."/>
            <person name="Bansal M."/>
            <person name="Baxter L."/>
            <person name="Beisel K.W."/>
            <person name="Bersano T."/>
            <person name="Bono H."/>
            <person name="Chalk A.M."/>
            <person name="Chiu K.P."/>
            <person name="Choudhary V."/>
            <person name="Christoffels A."/>
            <person name="Clutterbuck D.R."/>
            <person name="Crowe M.L."/>
            <person name="Dalla E."/>
            <person name="Dalrymple B.P."/>
            <person name="de Bono B."/>
            <person name="Della Gatta G."/>
            <person name="di Bernardo D."/>
            <person name="Down T."/>
            <person name="Engstrom P."/>
            <person name="Fagiolini M."/>
            <person name="Faulkner G."/>
            <person name="Fletcher C.F."/>
            <person name="Fukushima T."/>
            <person name="Furuno M."/>
            <person name="Futaki S."/>
            <person name="Gariboldi M."/>
            <person name="Georgii-Hemming P."/>
            <person name="Gingeras T.R."/>
            <person name="Gojobori T."/>
            <person name="Green R.E."/>
            <person name="Gustincich S."/>
            <person name="Harbers M."/>
            <person name="Hayashi Y."/>
            <person name="Hensch T.K."/>
            <person name="Hirokawa N."/>
            <person name="Hill D."/>
            <person name="Huminiecki L."/>
            <person name="Iacono M."/>
            <person name="Ikeo K."/>
            <person name="Iwama A."/>
            <person name="Ishikawa T."/>
            <person name="Jakt M."/>
            <person name="Kanapin A."/>
            <person name="Katoh M."/>
            <person name="Kawasawa Y."/>
            <person name="Kelso J."/>
            <person name="Kitamura H."/>
            <person name="Kitano H."/>
            <person name="Kollias G."/>
            <person name="Krishnan S.P."/>
            <person name="Kruger A."/>
            <person name="Kummerfeld S.K."/>
            <person name="Kurochkin I.V."/>
            <person name="Lareau L.F."/>
            <person name="Lazarevic D."/>
            <person name="Lipovich L."/>
            <person name="Liu J."/>
            <person name="Liuni S."/>
            <person name="McWilliam S."/>
            <person name="Madan Babu M."/>
            <person name="Madera M."/>
            <person name="Marchionni L."/>
            <person name="Matsuda H."/>
            <person name="Matsuzawa S."/>
            <person name="Miki H."/>
            <person name="Mignone F."/>
            <person name="Miyake S."/>
            <person name="Morris K."/>
            <person name="Mottagui-Tabar S."/>
            <person name="Mulder N."/>
            <person name="Nakano N."/>
            <person name="Nakauchi H."/>
            <person name="Ng P."/>
            <person name="Nilsson R."/>
            <person name="Nishiguchi S."/>
            <person name="Nishikawa S."/>
            <person name="Nori F."/>
            <person name="Ohara O."/>
            <person name="Okazaki Y."/>
            <person name="Orlando V."/>
            <person name="Pang K.C."/>
            <person name="Pavan W.J."/>
            <person name="Pavesi G."/>
            <person name="Pesole G."/>
            <person name="Petrovsky N."/>
            <person name="Piazza S."/>
            <person name="Reed J."/>
            <person name="Reid J.F."/>
            <person name="Ring B.Z."/>
            <person name="Ringwald M."/>
            <person name="Rost B."/>
            <person name="Ruan Y."/>
            <person name="Salzberg S.L."/>
            <person name="Sandelin A."/>
            <person name="Schneider C."/>
            <person name="Schoenbach C."/>
            <person name="Sekiguchi K."/>
            <person name="Semple C.A."/>
            <person name="Seno S."/>
            <person name="Sessa L."/>
            <person name="Sheng Y."/>
            <person name="Shibata Y."/>
            <person name="Shimada H."/>
            <person name="Shimada K."/>
            <person name="Silva D."/>
            <person name="Sinclair B."/>
            <person name="Sperling S."/>
            <person name="Stupka E."/>
            <person name="Sugiura K."/>
            <person name="Sultana R."/>
            <person name="Takenaka Y."/>
            <person name="Taki K."/>
            <person name="Tammoja K."/>
            <person name="Tan S.L."/>
            <person name="Tang S."/>
            <person name="Taylor M.S."/>
            <person name="Tegner J."/>
            <person name="Teichmann S.A."/>
            <person name="Ueda H.R."/>
            <person name="van Nimwegen E."/>
            <person name="Verardo R."/>
            <person name="Wei C.L."/>
            <person name="Yagi K."/>
            <person name="Yamanishi H."/>
            <person name="Zabarovsky E."/>
            <person name="Zhu S."/>
            <person name="Zimmer A."/>
            <person name="Hide W."/>
            <person name="Bult C."/>
            <person name="Grimmond S.M."/>
            <person name="Teasdale R.D."/>
            <person name="Liu E.T."/>
            <person name="Brusic V."/>
            <person name="Quackenbush J."/>
            <person name="Wahlestedt C."/>
            <person name="Mattick J.S."/>
            <person name="Hume D.A."/>
            <person name="Kai C."/>
            <person name="Sasaki D."/>
            <person name="Tomaru Y."/>
            <person name="Fukuda S."/>
            <person name="Kanamori-Katayama M."/>
            <person name="Suzuki M."/>
            <person name="Aoki J."/>
            <person name="Arakawa T."/>
            <person name="Iida J."/>
            <person name="Imamura K."/>
            <person name="Itoh M."/>
            <person name="Kato T."/>
            <person name="Kawaji H."/>
            <person name="Kawagashira N."/>
            <person name="Kawashima T."/>
            <person name="Kojima M."/>
            <person name="Kondo S."/>
            <person name="Konno H."/>
            <person name="Nakano K."/>
            <person name="Ninomiya N."/>
            <person name="Nishio T."/>
            <person name="Okada M."/>
            <person name="Plessy C."/>
            <person name="Shibata K."/>
            <person name="Shiraki T."/>
            <person name="Suzuki S."/>
            <person name="Tagami M."/>
            <person name="Waki K."/>
            <person name="Watahiki A."/>
            <person name="Okamura-Oho Y."/>
            <person name="Suzuki H."/>
            <person name="Kawai J."/>
            <person name="Hayashizaki Y."/>
        </authorList>
    </citation>
    <scope>NUCLEOTIDE SEQUENCE [LARGE SCALE MRNA]</scope>
    <source>
        <strain>C57BL/6J</strain>
        <tissue>Eye</tissue>
    </source>
</reference>
<reference key="3">
    <citation type="journal article" date="2009" name="PLoS Biol.">
        <title>Lineage-specific biology revealed by a finished genome assembly of the mouse.</title>
        <authorList>
            <person name="Church D.M."/>
            <person name="Goodstadt L."/>
            <person name="Hillier L.W."/>
            <person name="Zody M.C."/>
            <person name="Goldstein S."/>
            <person name="She X."/>
            <person name="Bult C.J."/>
            <person name="Agarwala R."/>
            <person name="Cherry J.L."/>
            <person name="DiCuccio M."/>
            <person name="Hlavina W."/>
            <person name="Kapustin Y."/>
            <person name="Meric P."/>
            <person name="Maglott D."/>
            <person name="Birtle Z."/>
            <person name="Marques A.C."/>
            <person name="Graves T."/>
            <person name="Zhou S."/>
            <person name="Teague B."/>
            <person name="Potamousis K."/>
            <person name="Churas C."/>
            <person name="Place M."/>
            <person name="Herschleb J."/>
            <person name="Runnheim R."/>
            <person name="Forrest D."/>
            <person name="Amos-Landgraf J."/>
            <person name="Schwartz D.C."/>
            <person name="Cheng Z."/>
            <person name="Lindblad-Toh K."/>
            <person name="Eichler E.E."/>
            <person name="Ponting C.P."/>
        </authorList>
    </citation>
    <scope>NUCLEOTIDE SEQUENCE [LARGE SCALE GENOMIC DNA]</scope>
    <source>
        <strain>C57BL/6J</strain>
    </source>
</reference>
<reference key="4">
    <citation type="submission" date="2005-07" db="EMBL/GenBank/DDBJ databases">
        <authorList>
            <person name="Mural R.J."/>
            <person name="Adams M.D."/>
            <person name="Myers E.W."/>
            <person name="Smith H.O."/>
            <person name="Venter J.C."/>
        </authorList>
    </citation>
    <scope>NUCLEOTIDE SEQUENCE [LARGE SCALE GENOMIC DNA]</scope>
</reference>
<reference key="5">
    <citation type="journal article" date="2004" name="Genome Res.">
        <title>The status, quality, and expansion of the NIH full-length cDNA project: the Mammalian Gene Collection (MGC).</title>
        <authorList>
            <consortium name="The MGC Project Team"/>
        </authorList>
    </citation>
    <scope>NUCLEOTIDE SEQUENCE [LARGE SCALE MRNA]</scope>
    <source>
        <tissue>Brain</tissue>
    </source>
</reference>
<reference key="6">
    <citation type="journal article" date="2004" name="Am. J. Physiol.">
        <title>Accumulation of beta (m), a structural member of X,K-ATPase beta-subunit family, in nuclear envelopes of perinatal myocytes.</title>
        <authorList>
            <person name="Zhao H."/>
            <person name="Pestov N.B."/>
            <person name="Korneenko T.V."/>
            <person name="Shakhparonov M.I."/>
            <person name="Modyanov N.N."/>
        </authorList>
    </citation>
    <scope>TISSUE SPECIFICITY</scope>
    <scope>DEVELOPMENTAL STAGE</scope>
</reference>
<reference key="7">
    <citation type="journal article" date="2007" name="Proc. Natl. Acad. Sci. U.S.A.">
        <title>Evolution of Na,K-ATPase betam-subunit into a coregulator of transcription in placental mammals.</title>
        <authorList>
            <person name="Pestov N.B."/>
            <person name="Ahmad N."/>
            <person name="Korneenko T.V."/>
            <person name="Zhao H."/>
            <person name="Radkov R."/>
            <person name="Schaer D."/>
            <person name="Roy S."/>
            <person name="Bibert S."/>
            <person name="Geering K."/>
            <person name="Modyanov N.N."/>
        </authorList>
    </citation>
    <scope>INTERACTION WITH SNW1</scope>
</reference>